<protein>
    <recommendedName>
        <fullName evidence="1">Glutamyl-tRNA reductase</fullName>
        <shortName evidence="1">GluTR</shortName>
        <ecNumber evidence="1">1.2.1.70</ecNumber>
    </recommendedName>
</protein>
<evidence type="ECO:0000255" key="1">
    <source>
        <dbReference type="HAMAP-Rule" id="MF_00087"/>
    </source>
</evidence>
<evidence type="ECO:0000305" key="2"/>
<keyword id="KW-0521">NADP</keyword>
<keyword id="KW-0560">Oxidoreductase</keyword>
<keyword id="KW-0627">Porphyrin biosynthesis</keyword>
<name>HEM1_COXBN</name>
<organism>
    <name type="scientific">Coxiella burnetii (strain Dugway 5J108-111)</name>
    <dbReference type="NCBI Taxonomy" id="434922"/>
    <lineage>
        <taxon>Bacteria</taxon>
        <taxon>Pseudomonadati</taxon>
        <taxon>Pseudomonadota</taxon>
        <taxon>Gammaproteobacteria</taxon>
        <taxon>Legionellales</taxon>
        <taxon>Coxiellaceae</taxon>
        <taxon>Coxiella</taxon>
    </lineage>
</organism>
<sequence>MPLLVCGINHQSAPLTVREKLVFTPERTPLALQSLLAEKAVNEALLLSTCNRTEIYTTVDEAATILRWLSKQPQLSGIDLRSFCYARRDIEMVRHVMRVGSGLDSMVLGEPQILGQMKQAYLLARRIGAVGSELGRLFPAVFAATKRIRSETAIGANPVSIAYAVVQLAKRIFSHLNQCQILLIGAGETIELVFSHLYNQGARHFFIANRTLTRAKQIAEPYHAQAIRLSDIPTYLPKVDIVISATMSQLPLVGKGAVESALRQRKRRPLFMADLALPRDIEPETAQLEDVYLYNIDDLQTLIAQNRQTREAAAKQAEAMVEMQAIHYMRQLQVHKAGDTIRRFRERVEMLRDQELEKALAHFQRTNDPKAVIAHFAHNLTNKILHQPTTKLRQAAYEDQVQLLLSAKELFDL</sequence>
<comment type="function">
    <text evidence="1">Catalyzes the NADPH-dependent reduction of glutamyl-tRNA(Glu) to glutamate 1-semialdehyde (GSA).</text>
</comment>
<comment type="catalytic activity">
    <reaction evidence="1">
        <text>(S)-4-amino-5-oxopentanoate + tRNA(Glu) + NADP(+) = L-glutamyl-tRNA(Glu) + NADPH + H(+)</text>
        <dbReference type="Rhea" id="RHEA:12344"/>
        <dbReference type="Rhea" id="RHEA-COMP:9663"/>
        <dbReference type="Rhea" id="RHEA-COMP:9680"/>
        <dbReference type="ChEBI" id="CHEBI:15378"/>
        <dbReference type="ChEBI" id="CHEBI:57501"/>
        <dbReference type="ChEBI" id="CHEBI:57783"/>
        <dbReference type="ChEBI" id="CHEBI:58349"/>
        <dbReference type="ChEBI" id="CHEBI:78442"/>
        <dbReference type="ChEBI" id="CHEBI:78520"/>
        <dbReference type="EC" id="1.2.1.70"/>
    </reaction>
</comment>
<comment type="pathway">
    <text evidence="1">Porphyrin-containing compound metabolism; protoporphyrin-IX biosynthesis; 5-aminolevulinate from L-glutamyl-tRNA(Glu): step 1/2.</text>
</comment>
<comment type="subunit">
    <text evidence="1">Homodimer.</text>
</comment>
<comment type="domain">
    <text evidence="1">Possesses an unusual extended V-shaped dimeric structure with each monomer consisting of three distinct domains arranged along a curved 'spinal' alpha-helix. The N-terminal catalytic domain specifically recognizes the glutamate moiety of the substrate. The second domain is the NADPH-binding domain, and the third C-terminal domain is responsible for dimerization.</text>
</comment>
<comment type="miscellaneous">
    <text evidence="1">During catalysis, the active site Cys acts as a nucleophile attacking the alpha-carbonyl group of tRNA-bound glutamate with the formation of a thioester intermediate between enzyme and glutamate, and the concomitant release of tRNA(Glu). The thioester intermediate is finally reduced by direct hydride transfer from NADPH, to form the product GSA.</text>
</comment>
<comment type="similarity">
    <text evidence="1">Belongs to the glutamyl-tRNA reductase family.</text>
</comment>
<comment type="sequence caution" evidence="2">
    <conflict type="erroneous initiation">
        <sequence resource="EMBL-CDS" id="ABS77974"/>
    </conflict>
</comment>
<accession>A9KGY4</accession>
<gene>
    <name evidence="1" type="primary">hemA</name>
    <name type="ordered locus">CBUD_2065</name>
</gene>
<feature type="chain" id="PRO_1000075405" description="Glutamyl-tRNA reductase">
    <location>
        <begin position="1"/>
        <end position="413"/>
    </location>
</feature>
<feature type="active site" description="Nucleophile" evidence="1">
    <location>
        <position position="50"/>
    </location>
</feature>
<feature type="binding site" evidence="1">
    <location>
        <begin position="49"/>
        <end position="52"/>
    </location>
    <ligand>
        <name>substrate</name>
    </ligand>
</feature>
<feature type="binding site" evidence="1">
    <location>
        <position position="105"/>
    </location>
    <ligand>
        <name>substrate</name>
    </ligand>
</feature>
<feature type="binding site" evidence="1">
    <location>
        <begin position="110"/>
        <end position="112"/>
    </location>
    <ligand>
        <name>substrate</name>
    </ligand>
</feature>
<feature type="binding site" evidence="1">
    <location>
        <position position="116"/>
    </location>
    <ligand>
        <name>substrate</name>
    </ligand>
</feature>
<feature type="binding site" evidence="1">
    <location>
        <begin position="185"/>
        <end position="190"/>
    </location>
    <ligand>
        <name>NADP(+)</name>
        <dbReference type="ChEBI" id="CHEBI:58349"/>
    </ligand>
</feature>
<feature type="site" description="Important for activity" evidence="1">
    <location>
        <position position="95"/>
    </location>
</feature>
<proteinExistence type="inferred from homology"/>
<reference key="1">
    <citation type="journal article" date="2009" name="Infect. Immun.">
        <title>Comparative genomics reveal extensive transposon-mediated genomic plasticity and diversity among potential effector proteins within the genus Coxiella.</title>
        <authorList>
            <person name="Beare P.A."/>
            <person name="Unsworth N."/>
            <person name="Andoh M."/>
            <person name="Voth D.E."/>
            <person name="Omsland A."/>
            <person name="Gilk S.D."/>
            <person name="Williams K.P."/>
            <person name="Sobral B.W."/>
            <person name="Kupko J.J. III"/>
            <person name="Porcella S.F."/>
            <person name="Samuel J.E."/>
            <person name="Heinzen R.A."/>
        </authorList>
    </citation>
    <scope>NUCLEOTIDE SEQUENCE [LARGE SCALE GENOMIC DNA]</scope>
    <source>
        <strain>Dugway 5J108-111</strain>
    </source>
</reference>
<dbReference type="EC" id="1.2.1.70" evidence="1"/>
<dbReference type="EMBL" id="CP000733">
    <property type="protein sequence ID" value="ABS77974.2"/>
    <property type="status" value="ALT_INIT"/>
    <property type="molecule type" value="Genomic_DNA"/>
</dbReference>
<dbReference type="RefSeq" id="WP_005769672.1">
    <property type="nucleotide sequence ID" value="NC_009727.1"/>
</dbReference>
<dbReference type="SMR" id="A9KGY4"/>
<dbReference type="KEGG" id="cbd:CBUD_2065"/>
<dbReference type="HOGENOM" id="CLU_035113_2_2_6"/>
<dbReference type="UniPathway" id="UPA00251">
    <property type="reaction ID" value="UER00316"/>
</dbReference>
<dbReference type="Proteomes" id="UP000008555">
    <property type="component" value="Chromosome"/>
</dbReference>
<dbReference type="GO" id="GO:0008883">
    <property type="term" value="F:glutamyl-tRNA reductase activity"/>
    <property type="evidence" value="ECO:0007669"/>
    <property type="project" value="UniProtKB-UniRule"/>
</dbReference>
<dbReference type="GO" id="GO:0050661">
    <property type="term" value="F:NADP binding"/>
    <property type="evidence" value="ECO:0007669"/>
    <property type="project" value="InterPro"/>
</dbReference>
<dbReference type="GO" id="GO:0019353">
    <property type="term" value="P:protoporphyrinogen IX biosynthetic process from glutamate"/>
    <property type="evidence" value="ECO:0007669"/>
    <property type="project" value="TreeGrafter"/>
</dbReference>
<dbReference type="CDD" id="cd05213">
    <property type="entry name" value="NAD_bind_Glutamyl_tRNA_reduct"/>
    <property type="match status" value="1"/>
</dbReference>
<dbReference type="FunFam" id="3.30.460.30:FF:000001">
    <property type="entry name" value="Glutamyl-tRNA reductase"/>
    <property type="match status" value="1"/>
</dbReference>
<dbReference type="FunFam" id="3.40.50.720:FF:000031">
    <property type="entry name" value="Glutamyl-tRNA reductase"/>
    <property type="match status" value="1"/>
</dbReference>
<dbReference type="Gene3D" id="3.30.460.30">
    <property type="entry name" value="Glutamyl-tRNA reductase, N-terminal domain"/>
    <property type="match status" value="1"/>
</dbReference>
<dbReference type="Gene3D" id="3.40.50.720">
    <property type="entry name" value="NAD(P)-binding Rossmann-like Domain"/>
    <property type="match status" value="1"/>
</dbReference>
<dbReference type="HAMAP" id="MF_00087">
    <property type="entry name" value="Glu_tRNA_reductase"/>
    <property type="match status" value="1"/>
</dbReference>
<dbReference type="InterPro" id="IPR000343">
    <property type="entry name" value="4pyrrol_synth_GluRdtase"/>
</dbReference>
<dbReference type="InterPro" id="IPR015896">
    <property type="entry name" value="4pyrrol_synth_GluRdtase_dimer"/>
</dbReference>
<dbReference type="InterPro" id="IPR015895">
    <property type="entry name" value="4pyrrol_synth_GluRdtase_N"/>
</dbReference>
<dbReference type="InterPro" id="IPR018214">
    <property type="entry name" value="GluRdtase_CS"/>
</dbReference>
<dbReference type="InterPro" id="IPR036453">
    <property type="entry name" value="GluRdtase_dimer_dom_sf"/>
</dbReference>
<dbReference type="InterPro" id="IPR036343">
    <property type="entry name" value="GluRdtase_N_sf"/>
</dbReference>
<dbReference type="InterPro" id="IPR036291">
    <property type="entry name" value="NAD(P)-bd_dom_sf"/>
</dbReference>
<dbReference type="InterPro" id="IPR006151">
    <property type="entry name" value="Shikm_DH/Glu-tRNA_Rdtase"/>
</dbReference>
<dbReference type="NCBIfam" id="TIGR01035">
    <property type="entry name" value="hemA"/>
    <property type="match status" value="1"/>
</dbReference>
<dbReference type="PANTHER" id="PTHR43013">
    <property type="entry name" value="GLUTAMYL-TRNA REDUCTASE"/>
    <property type="match status" value="1"/>
</dbReference>
<dbReference type="PANTHER" id="PTHR43013:SF1">
    <property type="entry name" value="GLUTAMYL-TRNA REDUCTASE"/>
    <property type="match status" value="1"/>
</dbReference>
<dbReference type="Pfam" id="PF00745">
    <property type="entry name" value="GlutR_dimer"/>
    <property type="match status" value="1"/>
</dbReference>
<dbReference type="Pfam" id="PF05201">
    <property type="entry name" value="GlutR_N"/>
    <property type="match status" value="1"/>
</dbReference>
<dbReference type="Pfam" id="PF01488">
    <property type="entry name" value="Shikimate_DH"/>
    <property type="match status" value="1"/>
</dbReference>
<dbReference type="PIRSF" id="PIRSF000445">
    <property type="entry name" value="4pyrrol_synth_GluRdtase"/>
    <property type="match status" value="1"/>
</dbReference>
<dbReference type="SUPFAM" id="SSF69742">
    <property type="entry name" value="Glutamyl tRNA-reductase catalytic, N-terminal domain"/>
    <property type="match status" value="1"/>
</dbReference>
<dbReference type="SUPFAM" id="SSF69075">
    <property type="entry name" value="Glutamyl tRNA-reductase dimerization domain"/>
    <property type="match status" value="1"/>
</dbReference>
<dbReference type="SUPFAM" id="SSF51735">
    <property type="entry name" value="NAD(P)-binding Rossmann-fold domains"/>
    <property type="match status" value="1"/>
</dbReference>
<dbReference type="PROSITE" id="PS00747">
    <property type="entry name" value="GLUTR"/>
    <property type="match status" value="1"/>
</dbReference>